<proteinExistence type="inferred from homology"/>
<sequence>MTEAKSYKDTVNLPQTKFDMRANAVKREPELQKFWAENQIYETLSENNPGDIFILHDGPPYANGSLHMGHALNKTLKDIINKYKLQRGYKARYVPGWDCHGLPIELKVLQSMKQKEREDLTPLKLRHKARDFALSTQKEQSESFQRFGVWGDWEHPYLTLTPDYEAAQIGVFGQMALKGYIYRGLKPVHWSPSSQTALAEAELEYPEGHTSRSVYAVFPITKASDTAKKVLTPYLKDLGVAIWTTTPWTLPGNLAVALNPDLTYAVVESGKPVCKHQYFIVAADLVDKLSATFETPLTVKATLKGEDLEHTTYRHPLFDRESEILIGGDYVTTESGTGLVHTAPGHGQEDYIVGQRYGLPVLSPVDEKGNFTSEAGQFAGLNVLKDANEAIIKELEEKGALLKEEPYQHKYPYDWRTKKPTIFRATEQWFASVEGFRDTALEAIKNVTWIPPQGENRITPMVADRSDWCISRQRSWGVPIPVFYDEETNEPLLNEETINHVQAIFAEKGSDAWWELSVEELLPQPYRNNGRKYRKGMDTMDVWFDSGSSWAAVAKQRPELSYPVDIYLEGSDQHRGWFQSSLLTSVATNGIAPYKMVLTHGFVLDEQGRKMSKSIGNIVDPNMIINGGKDQKKEPAYGADVLRLWVSSVDYSSDVPIGQNILKQLVDVRNKIRNTARFLLGNLHDFDPEKDTVAYEDLPELDRYMLHRITEVFTEVTEAFETFQFFRFFQVVQNFCVVDLSNFYLDIAKDRLYISDPNNLRRRSCQTVLKVALENLAKSIAPVLCHLAEDIWQFLPYKTPYKSVFEAGWVELESEWKRPELTPKWSKFRQIRDEVNKVMELARKDKMIGSSLDAKVLLYVSDKELREHLDSFNPSDSLSNNRVDELRYLFLASQVDLVDSPKTIGKANYKSESETLGVAIVKADGEKCDRCWNYSTHVGEFVDDPTLCERCNAALKGEF</sequence>
<comment type="function">
    <text evidence="1">Catalyzes the attachment of isoleucine to tRNA(Ile). As IleRS can inadvertently accommodate and process structurally similar amino acids such as valine, to avoid such errors it has two additional distinct tRNA(Ile)-dependent editing activities. One activity is designated as 'pretransfer' editing and involves the hydrolysis of activated Val-AMP. The other activity is designated 'posttransfer' editing and involves deacylation of mischarged Val-tRNA(Ile).</text>
</comment>
<comment type="catalytic activity">
    <reaction evidence="1">
        <text>tRNA(Ile) + L-isoleucine + ATP = L-isoleucyl-tRNA(Ile) + AMP + diphosphate</text>
        <dbReference type="Rhea" id="RHEA:11060"/>
        <dbReference type="Rhea" id="RHEA-COMP:9666"/>
        <dbReference type="Rhea" id="RHEA-COMP:9695"/>
        <dbReference type="ChEBI" id="CHEBI:30616"/>
        <dbReference type="ChEBI" id="CHEBI:33019"/>
        <dbReference type="ChEBI" id="CHEBI:58045"/>
        <dbReference type="ChEBI" id="CHEBI:78442"/>
        <dbReference type="ChEBI" id="CHEBI:78528"/>
        <dbReference type="ChEBI" id="CHEBI:456215"/>
        <dbReference type="EC" id="6.1.1.5"/>
    </reaction>
</comment>
<comment type="cofactor">
    <cofactor evidence="1">
        <name>Zn(2+)</name>
        <dbReference type="ChEBI" id="CHEBI:29105"/>
    </cofactor>
    <text evidence="1">Binds 1 zinc ion per subunit.</text>
</comment>
<comment type="subunit">
    <text evidence="1">Monomer.</text>
</comment>
<comment type="subcellular location">
    <subcellularLocation>
        <location evidence="1">Cytoplasm</location>
    </subcellularLocation>
</comment>
<comment type="domain">
    <text evidence="1">IleRS has two distinct active sites: one for aminoacylation and one for editing. The misactivated valine is translocated from the active site to the editing site, which sterically excludes the correctly activated isoleucine. The single editing site contains two valyl binding pockets, one specific for each substrate (Val-AMP or Val-tRNA(Ile)).</text>
</comment>
<comment type="similarity">
    <text evidence="1">Belongs to the class-I aminoacyl-tRNA synthetase family. IleS type 1 subfamily.</text>
</comment>
<keyword id="KW-0030">Aminoacyl-tRNA synthetase</keyword>
<keyword id="KW-0067">ATP-binding</keyword>
<keyword id="KW-0963">Cytoplasm</keyword>
<keyword id="KW-0436">Ligase</keyword>
<keyword id="KW-0479">Metal-binding</keyword>
<keyword id="KW-0547">Nucleotide-binding</keyword>
<keyword id="KW-0648">Protein biosynthesis</keyword>
<keyword id="KW-1185">Reference proteome</keyword>
<keyword id="KW-0862">Zinc</keyword>
<organism>
    <name type="scientific">Gloeothece citriformis (strain PCC 7424)</name>
    <name type="common">Cyanothece sp. (strain PCC 7424)</name>
    <dbReference type="NCBI Taxonomy" id="65393"/>
    <lineage>
        <taxon>Bacteria</taxon>
        <taxon>Bacillati</taxon>
        <taxon>Cyanobacteriota</taxon>
        <taxon>Cyanophyceae</taxon>
        <taxon>Oscillatoriophycideae</taxon>
        <taxon>Chroococcales</taxon>
        <taxon>Aphanothecaceae</taxon>
        <taxon>Gloeothece</taxon>
        <taxon>Gloeothece citriformis</taxon>
    </lineage>
</organism>
<evidence type="ECO:0000255" key="1">
    <source>
        <dbReference type="HAMAP-Rule" id="MF_02002"/>
    </source>
</evidence>
<protein>
    <recommendedName>
        <fullName evidence="1">Isoleucine--tRNA ligase</fullName>
        <ecNumber evidence="1">6.1.1.5</ecNumber>
    </recommendedName>
    <alternativeName>
        <fullName evidence="1">Isoleucyl-tRNA synthetase</fullName>
        <shortName evidence="1">IleRS</shortName>
    </alternativeName>
</protein>
<dbReference type="EC" id="6.1.1.5" evidence="1"/>
<dbReference type="EMBL" id="CP001291">
    <property type="protein sequence ID" value="ACK73406.1"/>
    <property type="molecule type" value="Genomic_DNA"/>
</dbReference>
<dbReference type="RefSeq" id="WP_015956986.1">
    <property type="nucleotide sequence ID" value="NC_011729.1"/>
</dbReference>
<dbReference type="SMR" id="B7KFT1"/>
<dbReference type="STRING" id="65393.PCC7424_5054"/>
<dbReference type="KEGG" id="cyc:PCC7424_5054"/>
<dbReference type="eggNOG" id="COG0060">
    <property type="taxonomic scope" value="Bacteria"/>
</dbReference>
<dbReference type="HOGENOM" id="CLU_001493_7_0_3"/>
<dbReference type="OrthoDB" id="9810365at2"/>
<dbReference type="Proteomes" id="UP000002384">
    <property type="component" value="Chromosome"/>
</dbReference>
<dbReference type="GO" id="GO:0005737">
    <property type="term" value="C:cytoplasm"/>
    <property type="evidence" value="ECO:0007669"/>
    <property type="project" value="UniProtKB-SubCell"/>
</dbReference>
<dbReference type="GO" id="GO:0002161">
    <property type="term" value="F:aminoacyl-tRNA deacylase activity"/>
    <property type="evidence" value="ECO:0007669"/>
    <property type="project" value="InterPro"/>
</dbReference>
<dbReference type="GO" id="GO:0005524">
    <property type="term" value="F:ATP binding"/>
    <property type="evidence" value="ECO:0007669"/>
    <property type="project" value="UniProtKB-UniRule"/>
</dbReference>
<dbReference type="GO" id="GO:0004822">
    <property type="term" value="F:isoleucine-tRNA ligase activity"/>
    <property type="evidence" value="ECO:0007669"/>
    <property type="project" value="UniProtKB-UniRule"/>
</dbReference>
<dbReference type="GO" id="GO:0000049">
    <property type="term" value="F:tRNA binding"/>
    <property type="evidence" value="ECO:0007669"/>
    <property type="project" value="InterPro"/>
</dbReference>
<dbReference type="GO" id="GO:0008270">
    <property type="term" value="F:zinc ion binding"/>
    <property type="evidence" value="ECO:0007669"/>
    <property type="project" value="UniProtKB-UniRule"/>
</dbReference>
<dbReference type="GO" id="GO:0006428">
    <property type="term" value="P:isoleucyl-tRNA aminoacylation"/>
    <property type="evidence" value="ECO:0007669"/>
    <property type="project" value="UniProtKB-UniRule"/>
</dbReference>
<dbReference type="CDD" id="cd07960">
    <property type="entry name" value="Anticodon_Ia_Ile_BEm"/>
    <property type="match status" value="1"/>
</dbReference>
<dbReference type="CDD" id="cd00818">
    <property type="entry name" value="IleRS_core"/>
    <property type="match status" value="1"/>
</dbReference>
<dbReference type="FunFam" id="1.10.730.20:FF:000001">
    <property type="entry name" value="Isoleucine--tRNA ligase"/>
    <property type="match status" value="1"/>
</dbReference>
<dbReference type="FunFam" id="1.10.10.830:FF:000002">
    <property type="entry name" value="Isoleucine--tRNA ligase, mitochondrial"/>
    <property type="match status" value="1"/>
</dbReference>
<dbReference type="FunFam" id="3.90.740.10:FF:000009">
    <property type="entry name" value="Isoleucyl-tRNA synthetase 2, mitochondrial"/>
    <property type="match status" value="1"/>
</dbReference>
<dbReference type="FunFam" id="3.40.50.620:FF:000111">
    <property type="entry name" value="Mitochondrial isoleucyl-tRNA synthetase"/>
    <property type="match status" value="1"/>
</dbReference>
<dbReference type="Gene3D" id="1.10.730.20">
    <property type="match status" value="1"/>
</dbReference>
<dbReference type="Gene3D" id="3.40.50.620">
    <property type="entry name" value="HUPs"/>
    <property type="match status" value="2"/>
</dbReference>
<dbReference type="Gene3D" id="1.10.10.830">
    <property type="entry name" value="Ile-tRNA synthetase CP2 domain-like"/>
    <property type="match status" value="1"/>
</dbReference>
<dbReference type="HAMAP" id="MF_02002">
    <property type="entry name" value="Ile_tRNA_synth_type1"/>
    <property type="match status" value="1"/>
</dbReference>
<dbReference type="InterPro" id="IPR001412">
    <property type="entry name" value="aa-tRNA-synth_I_CS"/>
</dbReference>
<dbReference type="InterPro" id="IPR002300">
    <property type="entry name" value="aa-tRNA-synth_Ia"/>
</dbReference>
<dbReference type="InterPro" id="IPR033708">
    <property type="entry name" value="Anticodon_Ile_BEm"/>
</dbReference>
<dbReference type="InterPro" id="IPR002301">
    <property type="entry name" value="Ile-tRNA-ligase"/>
</dbReference>
<dbReference type="InterPro" id="IPR023585">
    <property type="entry name" value="Ile-tRNA-ligase_type1"/>
</dbReference>
<dbReference type="InterPro" id="IPR050081">
    <property type="entry name" value="Ile-tRNA_ligase"/>
</dbReference>
<dbReference type="InterPro" id="IPR013155">
    <property type="entry name" value="M/V/L/I-tRNA-synth_anticd-bd"/>
</dbReference>
<dbReference type="InterPro" id="IPR014729">
    <property type="entry name" value="Rossmann-like_a/b/a_fold"/>
</dbReference>
<dbReference type="InterPro" id="IPR009080">
    <property type="entry name" value="tRNAsynth_Ia_anticodon-bd"/>
</dbReference>
<dbReference type="InterPro" id="IPR009008">
    <property type="entry name" value="Val/Leu/Ile-tRNA-synth_edit"/>
</dbReference>
<dbReference type="InterPro" id="IPR010663">
    <property type="entry name" value="Znf_FPG/IleRS"/>
</dbReference>
<dbReference type="NCBIfam" id="TIGR00392">
    <property type="entry name" value="ileS"/>
    <property type="match status" value="1"/>
</dbReference>
<dbReference type="PANTHER" id="PTHR42765:SF1">
    <property type="entry name" value="ISOLEUCINE--TRNA LIGASE, MITOCHONDRIAL"/>
    <property type="match status" value="1"/>
</dbReference>
<dbReference type="PANTHER" id="PTHR42765">
    <property type="entry name" value="SOLEUCYL-TRNA SYNTHETASE"/>
    <property type="match status" value="1"/>
</dbReference>
<dbReference type="Pfam" id="PF08264">
    <property type="entry name" value="Anticodon_1"/>
    <property type="match status" value="1"/>
</dbReference>
<dbReference type="Pfam" id="PF00133">
    <property type="entry name" value="tRNA-synt_1"/>
    <property type="match status" value="1"/>
</dbReference>
<dbReference type="Pfam" id="PF06827">
    <property type="entry name" value="zf-FPG_IleRS"/>
    <property type="match status" value="1"/>
</dbReference>
<dbReference type="PRINTS" id="PR00984">
    <property type="entry name" value="TRNASYNTHILE"/>
</dbReference>
<dbReference type="SUPFAM" id="SSF47323">
    <property type="entry name" value="Anticodon-binding domain of a subclass of class I aminoacyl-tRNA synthetases"/>
    <property type="match status" value="1"/>
</dbReference>
<dbReference type="SUPFAM" id="SSF52374">
    <property type="entry name" value="Nucleotidylyl transferase"/>
    <property type="match status" value="1"/>
</dbReference>
<dbReference type="SUPFAM" id="SSF50677">
    <property type="entry name" value="ValRS/IleRS/LeuRS editing domain"/>
    <property type="match status" value="1"/>
</dbReference>
<dbReference type="PROSITE" id="PS00178">
    <property type="entry name" value="AA_TRNA_LIGASE_I"/>
    <property type="match status" value="1"/>
</dbReference>
<accession>B7KFT1</accession>
<reference key="1">
    <citation type="journal article" date="2011" name="MBio">
        <title>Novel metabolic attributes of the genus Cyanothece, comprising a group of unicellular nitrogen-fixing Cyanobacteria.</title>
        <authorList>
            <person name="Bandyopadhyay A."/>
            <person name="Elvitigala T."/>
            <person name="Welsh E."/>
            <person name="Stockel J."/>
            <person name="Liberton M."/>
            <person name="Min H."/>
            <person name="Sherman L.A."/>
            <person name="Pakrasi H.B."/>
        </authorList>
    </citation>
    <scope>NUCLEOTIDE SEQUENCE [LARGE SCALE GENOMIC DNA]</scope>
    <source>
        <strain>PCC 7424</strain>
    </source>
</reference>
<gene>
    <name evidence="1" type="primary">ileS</name>
    <name type="ordered locus">PCC7424_5054</name>
</gene>
<name>SYI_GLOC7</name>
<feature type="chain" id="PRO_1000189147" description="Isoleucine--tRNA ligase">
    <location>
        <begin position="1"/>
        <end position="959"/>
    </location>
</feature>
<feature type="short sequence motif" description="'HIGH' region">
    <location>
        <begin position="60"/>
        <end position="70"/>
    </location>
</feature>
<feature type="short sequence motif" description="'KMSKS' region">
    <location>
        <begin position="610"/>
        <end position="614"/>
    </location>
</feature>
<feature type="binding site" evidence="1">
    <location>
        <position position="569"/>
    </location>
    <ligand>
        <name>L-isoleucyl-5'-AMP</name>
        <dbReference type="ChEBI" id="CHEBI:178002"/>
    </ligand>
</feature>
<feature type="binding site" evidence="1">
    <location>
        <position position="613"/>
    </location>
    <ligand>
        <name>ATP</name>
        <dbReference type="ChEBI" id="CHEBI:30616"/>
    </ligand>
</feature>
<feature type="binding site" evidence="1">
    <location>
        <position position="928"/>
    </location>
    <ligand>
        <name>Zn(2+)</name>
        <dbReference type="ChEBI" id="CHEBI:29105"/>
    </ligand>
</feature>
<feature type="binding site" evidence="1">
    <location>
        <position position="931"/>
    </location>
    <ligand>
        <name>Zn(2+)</name>
        <dbReference type="ChEBI" id="CHEBI:29105"/>
    </ligand>
</feature>
<feature type="binding site" evidence="1">
    <location>
        <position position="948"/>
    </location>
    <ligand>
        <name>Zn(2+)</name>
        <dbReference type="ChEBI" id="CHEBI:29105"/>
    </ligand>
</feature>
<feature type="binding site" evidence="1">
    <location>
        <position position="951"/>
    </location>
    <ligand>
        <name>Zn(2+)</name>
        <dbReference type="ChEBI" id="CHEBI:29105"/>
    </ligand>
</feature>